<gene>
    <name type="ORF">SPAC222.18</name>
</gene>
<name>YFMR_SCHPO</name>
<dbReference type="EMBL" id="CU329670">
    <property type="protein sequence ID" value="CBA11493.1"/>
    <property type="molecule type" value="Genomic_DNA"/>
</dbReference>
<dbReference type="RefSeq" id="XP_002742502.1">
    <property type="nucleotide sequence ID" value="XM_002742456.2"/>
</dbReference>
<dbReference type="SMR" id="C6Y4C0"/>
<dbReference type="BioGRID" id="1028396">
    <property type="interactions" value="2"/>
</dbReference>
<dbReference type="FunCoup" id="C6Y4C0">
    <property type="interactions" value="12"/>
</dbReference>
<dbReference type="STRING" id="284812.C6Y4C0"/>
<dbReference type="PaxDb" id="4896-SPAC222.18.1"/>
<dbReference type="EnsemblFungi" id="SPAC222.18.1">
    <property type="protein sequence ID" value="SPAC222.18.1:pep"/>
    <property type="gene ID" value="SPAC222.18"/>
</dbReference>
<dbReference type="PomBase" id="SPAC222.18"/>
<dbReference type="VEuPathDB" id="FungiDB:SPAC222.18"/>
<dbReference type="HOGENOM" id="CLU_2159870_0_0_1"/>
<dbReference type="InParanoid" id="C6Y4C0"/>
<dbReference type="Reactome" id="R-SPO-72163">
    <property type="pathway name" value="mRNA Splicing - Major Pathway"/>
</dbReference>
<dbReference type="Reactome" id="R-SPO-72203">
    <property type="pathway name" value="Processing of Capped Intron-Containing Pre-mRNA"/>
</dbReference>
<dbReference type="PRO" id="PR:C6Y4C0"/>
<dbReference type="Proteomes" id="UP000002485">
    <property type="component" value="Chromosome I"/>
</dbReference>
<dbReference type="GO" id="GO:0016607">
    <property type="term" value="C:nuclear speck"/>
    <property type="evidence" value="ECO:0000318"/>
    <property type="project" value="GO_Central"/>
</dbReference>
<dbReference type="GO" id="GO:0005634">
    <property type="term" value="C:nucleus"/>
    <property type="evidence" value="ECO:0000250"/>
    <property type="project" value="PomBase"/>
</dbReference>
<dbReference type="GO" id="GO:0003723">
    <property type="term" value="F:RNA binding"/>
    <property type="evidence" value="ECO:0000318"/>
    <property type="project" value="GO_Central"/>
</dbReference>
<dbReference type="GO" id="GO:0045292">
    <property type="term" value="P:mRNA cis splicing, via spliceosome"/>
    <property type="evidence" value="ECO:0000250"/>
    <property type="project" value="PomBase"/>
</dbReference>
<dbReference type="FunFam" id="3.30.70.330:FF:001550">
    <property type="entry name" value="Putative splicing factor C222.18"/>
    <property type="match status" value="1"/>
</dbReference>
<dbReference type="Gene3D" id="3.30.70.330">
    <property type="match status" value="1"/>
</dbReference>
<dbReference type="InterPro" id="IPR012677">
    <property type="entry name" value="Nucleotide-bd_a/b_plait_sf"/>
</dbReference>
<dbReference type="InterPro" id="IPR035979">
    <property type="entry name" value="RBD_domain_sf"/>
</dbReference>
<dbReference type="InterPro" id="IPR000504">
    <property type="entry name" value="RRM_dom"/>
</dbReference>
<dbReference type="InterPro" id="IPR050907">
    <property type="entry name" value="SRSF"/>
</dbReference>
<dbReference type="PANTHER" id="PTHR23147">
    <property type="entry name" value="SERINE/ARGININE RICH SPLICING FACTOR"/>
    <property type="match status" value="1"/>
</dbReference>
<dbReference type="Pfam" id="PF00076">
    <property type="entry name" value="RRM_1"/>
    <property type="match status" value="1"/>
</dbReference>
<dbReference type="SMART" id="SM00360">
    <property type="entry name" value="RRM"/>
    <property type="match status" value="1"/>
</dbReference>
<dbReference type="SUPFAM" id="SSF54928">
    <property type="entry name" value="RNA-binding domain, RBD"/>
    <property type="match status" value="1"/>
</dbReference>
<dbReference type="PROSITE" id="PS50102">
    <property type="entry name" value="RRM"/>
    <property type="match status" value="1"/>
</dbReference>
<evidence type="ECO:0000250" key="1"/>
<evidence type="ECO:0000255" key="2">
    <source>
        <dbReference type="PROSITE-ProRule" id="PRU00176"/>
    </source>
</evidence>
<evidence type="ECO:0000305" key="3"/>
<reference key="1">
    <citation type="journal article" date="2002" name="Nature">
        <title>The genome sequence of Schizosaccharomyces pombe.</title>
        <authorList>
            <person name="Wood V."/>
            <person name="Gwilliam R."/>
            <person name="Rajandream M.A."/>
            <person name="Lyne M.H."/>
            <person name="Lyne R."/>
            <person name="Stewart A."/>
            <person name="Sgouros J.G."/>
            <person name="Peat N."/>
            <person name="Hayles J."/>
            <person name="Baker S.G."/>
            <person name="Basham D."/>
            <person name="Bowman S."/>
            <person name="Brooks K."/>
            <person name="Brown D."/>
            <person name="Brown S."/>
            <person name="Chillingworth T."/>
            <person name="Churcher C.M."/>
            <person name="Collins M."/>
            <person name="Connor R."/>
            <person name="Cronin A."/>
            <person name="Davis P."/>
            <person name="Feltwell T."/>
            <person name="Fraser A."/>
            <person name="Gentles S."/>
            <person name="Goble A."/>
            <person name="Hamlin N."/>
            <person name="Harris D.E."/>
            <person name="Hidalgo J."/>
            <person name="Hodgson G."/>
            <person name="Holroyd S."/>
            <person name="Hornsby T."/>
            <person name="Howarth S."/>
            <person name="Huckle E.J."/>
            <person name="Hunt S."/>
            <person name="Jagels K."/>
            <person name="James K.D."/>
            <person name="Jones L."/>
            <person name="Jones M."/>
            <person name="Leather S."/>
            <person name="McDonald S."/>
            <person name="McLean J."/>
            <person name="Mooney P."/>
            <person name="Moule S."/>
            <person name="Mungall K.L."/>
            <person name="Murphy L.D."/>
            <person name="Niblett D."/>
            <person name="Odell C."/>
            <person name="Oliver K."/>
            <person name="O'Neil S."/>
            <person name="Pearson D."/>
            <person name="Quail M.A."/>
            <person name="Rabbinowitsch E."/>
            <person name="Rutherford K.M."/>
            <person name="Rutter S."/>
            <person name="Saunders D."/>
            <person name="Seeger K."/>
            <person name="Sharp S."/>
            <person name="Skelton J."/>
            <person name="Simmonds M.N."/>
            <person name="Squares R."/>
            <person name="Squares S."/>
            <person name="Stevens K."/>
            <person name="Taylor K."/>
            <person name="Taylor R.G."/>
            <person name="Tivey A."/>
            <person name="Walsh S.V."/>
            <person name="Warren T."/>
            <person name="Whitehead S."/>
            <person name="Woodward J.R."/>
            <person name="Volckaert G."/>
            <person name="Aert R."/>
            <person name="Robben J."/>
            <person name="Grymonprez B."/>
            <person name="Weltjens I."/>
            <person name="Vanstreels E."/>
            <person name="Rieger M."/>
            <person name="Schaefer M."/>
            <person name="Mueller-Auer S."/>
            <person name="Gabel C."/>
            <person name="Fuchs M."/>
            <person name="Duesterhoeft A."/>
            <person name="Fritzc C."/>
            <person name="Holzer E."/>
            <person name="Moestl D."/>
            <person name="Hilbert H."/>
            <person name="Borzym K."/>
            <person name="Langer I."/>
            <person name="Beck A."/>
            <person name="Lehrach H."/>
            <person name="Reinhardt R."/>
            <person name="Pohl T.M."/>
            <person name="Eger P."/>
            <person name="Zimmermann W."/>
            <person name="Wedler H."/>
            <person name="Wambutt R."/>
            <person name="Purnelle B."/>
            <person name="Goffeau A."/>
            <person name="Cadieu E."/>
            <person name="Dreano S."/>
            <person name="Gloux S."/>
            <person name="Lelaure V."/>
            <person name="Mottier S."/>
            <person name="Galibert F."/>
            <person name="Aves S.J."/>
            <person name="Xiang Z."/>
            <person name="Hunt C."/>
            <person name="Moore K."/>
            <person name="Hurst S.M."/>
            <person name="Lucas M."/>
            <person name="Rochet M."/>
            <person name="Gaillardin C."/>
            <person name="Tallada V.A."/>
            <person name="Garzon A."/>
            <person name="Thode G."/>
            <person name="Daga R.R."/>
            <person name="Cruzado L."/>
            <person name="Jimenez J."/>
            <person name="Sanchez M."/>
            <person name="del Rey F."/>
            <person name="Benito J."/>
            <person name="Dominguez A."/>
            <person name="Revuelta J.L."/>
            <person name="Moreno S."/>
            <person name="Armstrong J."/>
            <person name="Forsburg S.L."/>
            <person name="Cerutti L."/>
            <person name="Lowe T."/>
            <person name="McCombie W.R."/>
            <person name="Paulsen I."/>
            <person name="Potashkin J."/>
            <person name="Shpakovski G.V."/>
            <person name="Ussery D."/>
            <person name="Barrell B.G."/>
            <person name="Nurse P."/>
        </authorList>
    </citation>
    <scope>NUCLEOTIDE SEQUENCE [LARGE SCALE GENOMIC DNA]</scope>
    <source>
        <strain>972 / ATCC 24843</strain>
    </source>
</reference>
<reference key="2">
    <citation type="journal article" date="2008" name="Nature">
        <title>Dynamic repertoire of a eukaryotic transcriptome surveyed at single-nucleotide resolution.</title>
        <authorList>
            <person name="Wilhelm B.T."/>
            <person name="Marguerat S."/>
            <person name="Watt S."/>
            <person name="Schubert F."/>
            <person name="Wood V."/>
            <person name="Goodhead I."/>
            <person name="Penkett C.J."/>
            <person name="Rogers J."/>
            <person name="Baehler J."/>
        </authorList>
    </citation>
    <scope>IDENTIFICATION</scope>
</reference>
<accession>C6Y4C0</accession>
<sequence>MSNAPSNTPTGFNYKPGHTLYIRNFGTDMRARTLGQAFEKWGRIVRCDIPISSNPQAHRYAFVEFEEREKAELAHEKMRNAKIGNDIIFVEWAKSRERYHRDDKRRLSNYA</sequence>
<organism>
    <name type="scientific">Schizosaccharomyces pombe (strain 972 / ATCC 24843)</name>
    <name type="common">Fission yeast</name>
    <dbReference type="NCBI Taxonomy" id="284812"/>
    <lineage>
        <taxon>Eukaryota</taxon>
        <taxon>Fungi</taxon>
        <taxon>Dikarya</taxon>
        <taxon>Ascomycota</taxon>
        <taxon>Taphrinomycotina</taxon>
        <taxon>Schizosaccharomycetes</taxon>
        <taxon>Schizosaccharomycetales</taxon>
        <taxon>Schizosaccharomycetaceae</taxon>
        <taxon>Schizosaccharomyces</taxon>
    </lineage>
</organism>
<comment type="function">
    <text evidence="1">Has a role in pre-mRNA splicing where it is involved in spliceosome assembly.</text>
</comment>
<comment type="subcellular location">
    <subcellularLocation>
        <location evidence="3">Nucleus</location>
    </subcellularLocation>
</comment>
<comment type="similarity">
    <text evidence="3">Belongs to the splicing factor SR family.</text>
</comment>
<keyword id="KW-0507">mRNA processing</keyword>
<keyword id="KW-0508">mRNA splicing</keyword>
<keyword id="KW-0539">Nucleus</keyword>
<keyword id="KW-1185">Reference proteome</keyword>
<keyword id="KW-0694">RNA-binding</keyword>
<feature type="chain" id="PRO_0000389142" description="Putative splicing factor C222.18">
    <location>
        <begin position="1"/>
        <end position="111"/>
    </location>
</feature>
<feature type="domain" description="RRM" evidence="2">
    <location>
        <begin position="18"/>
        <end position="95"/>
    </location>
</feature>
<proteinExistence type="evidence at transcript level"/>
<protein>
    <recommendedName>
        <fullName>Putative splicing factor C222.18</fullName>
    </recommendedName>
</protein>